<protein>
    <recommendedName>
        <fullName>Putative protease MJ0651</fullName>
        <ecNumber>3.4.21.-</ecNumber>
    </recommendedName>
</protein>
<name>Y651_METJA</name>
<accession>Q58067</accession>
<comment type="similarity">
    <text evidence="2">Belongs to the peptidase S49 family.</text>
</comment>
<reference key="1">
    <citation type="journal article" date="1996" name="Science">
        <title>Complete genome sequence of the methanogenic archaeon, Methanococcus jannaschii.</title>
        <authorList>
            <person name="Bult C.J."/>
            <person name="White O."/>
            <person name="Olsen G.J."/>
            <person name="Zhou L."/>
            <person name="Fleischmann R.D."/>
            <person name="Sutton G.G."/>
            <person name="Blake J.A."/>
            <person name="FitzGerald L.M."/>
            <person name="Clayton R.A."/>
            <person name="Gocayne J.D."/>
            <person name="Kerlavage A.R."/>
            <person name="Dougherty B.A."/>
            <person name="Tomb J.-F."/>
            <person name="Adams M.D."/>
            <person name="Reich C.I."/>
            <person name="Overbeek R."/>
            <person name="Kirkness E.F."/>
            <person name="Weinstock K.G."/>
            <person name="Merrick J.M."/>
            <person name="Glodek A."/>
            <person name="Scott J.L."/>
            <person name="Geoghagen N.S.M."/>
            <person name="Weidman J.F."/>
            <person name="Fuhrmann J.L."/>
            <person name="Nguyen D."/>
            <person name="Utterback T.R."/>
            <person name="Kelley J.M."/>
            <person name="Peterson J.D."/>
            <person name="Sadow P.W."/>
            <person name="Hanna M.C."/>
            <person name="Cotton M.D."/>
            <person name="Roberts K.M."/>
            <person name="Hurst M.A."/>
            <person name="Kaine B.P."/>
            <person name="Borodovsky M."/>
            <person name="Klenk H.-P."/>
            <person name="Fraser C.M."/>
            <person name="Smith H.O."/>
            <person name="Woese C.R."/>
            <person name="Venter J.C."/>
        </authorList>
    </citation>
    <scope>NUCLEOTIDE SEQUENCE [LARGE SCALE GENOMIC DNA]</scope>
    <source>
        <strain>ATCC 43067 / DSM 2661 / JAL-1 / JCM 10045 / NBRC 100440</strain>
    </source>
</reference>
<organism>
    <name type="scientific">Methanocaldococcus jannaschii (strain ATCC 43067 / DSM 2661 / JAL-1 / JCM 10045 / NBRC 100440)</name>
    <name type="common">Methanococcus jannaschii</name>
    <dbReference type="NCBI Taxonomy" id="243232"/>
    <lineage>
        <taxon>Archaea</taxon>
        <taxon>Methanobacteriati</taxon>
        <taxon>Methanobacteriota</taxon>
        <taxon>Methanomada group</taxon>
        <taxon>Methanococci</taxon>
        <taxon>Methanococcales</taxon>
        <taxon>Methanocaldococcaceae</taxon>
        <taxon>Methanocaldococcus</taxon>
    </lineage>
</organism>
<feature type="chain" id="PRO_0000171456" description="Putative protease MJ0651">
    <location>
        <begin position="1"/>
        <end position="311"/>
    </location>
</feature>
<feature type="active site" description="Nucleophile" evidence="1">
    <location>
        <position position="128"/>
    </location>
</feature>
<feature type="active site" description="Proton donor/acceptor" evidence="1">
    <location>
        <position position="180"/>
    </location>
</feature>
<gene>
    <name type="ordered locus">MJ0651</name>
</gene>
<dbReference type="EC" id="3.4.21.-"/>
<dbReference type="EMBL" id="L77117">
    <property type="protein sequence ID" value="AAB98642.1"/>
    <property type="molecule type" value="Genomic_DNA"/>
</dbReference>
<dbReference type="RefSeq" id="WP_010870156.1">
    <property type="nucleotide sequence ID" value="NC_000909.1"/>
</dbReference>
<dbReference type="SMR" id="Q58067"/>
<dbReference type="STRING" id="243232.MJ_0651"/>
<dbReference type="PaxDb" id="243232-MJ_0651"/>
<dbReference type="EnsemblBacteria" id="AAB98642">
    <property type="protein sequence ID" value="AAB98642"/>
    <property type="gene ID" value="MJ_0651"/>
</dbReference>
<dbReference type="GeneID" id="1451517"/>
<dbReference type="KEGG" id="mja:MJ_0651"/>
<dbReference type="eggNOG" id="arCOG01311">
    <property type="taxonomic scope" value="Archaea"/>
</dbReference>
<dbReference type="HOGENOM" id="CLU_046540_0_0_2"/>
<dbReference type="InParanoid" id="Q58067"/>
<dbReference type="OrthoDB" id="31107at2157"/>
<dbReference type="PhylomeDB" id="Q58067"/>
<dbReference type="Proteomes" id="UP000000805">
    <property type="component" value="Chromosome"/>
</dbReference>
<dbReference type="GO" id="GO:0008236">
    <property type="term" value="F:serine-type peptidase activity"/>
    <property type="evidence" value="ECO:0007669"/>
    <property type="project" value="UniProtKB-KW"/>
</dbReference>
<dbReference type="GO" id="GO:0006508">
    <property type="term" value="P:proteolysis"/>
    <property type="evidence" value="ECO:0007669"/>
    <property type="project" value="UniProtKB-KW"/>
</dbReference>
<dbReference type="CDD" id="cd07023">
    <property type="entry name" value="S49_Sppa_N_C"/>
    <property type="match status" value="1"/>
</dbReference>
<dbReference type="Gene3D" id="6.20.330.10">
    <property type="match status" value="1"/>
</dbReference>
<dbReference type="Gene3D" id="3.90.226.10">
    <property type="entry name" value="2-enoyl-CoA Hydratase, Chain A, domain 1"/>
    <property type="match status" value="1"/>
</dbReference>
<dbReference type="InterPro" id="IPR029045">
    <property type="entry name" value="ClpP/crotonase-like_dom_sf"/>
</dbReference>
<dbReference type="InterPro" id="IPR004635">
    <property type="entry name" value="Pept_S49_SppA"/>
</dbReference>
<dbReference type="InterPro" id="IPR002142">
    <property type="entry name" value="Peptidase_S49"/>
</dbReference>
<dbReference type="InterPro" id="IPR047272">
    <property type="entry name" value="S49_SppA_C"/>
</dbReference>
<dbReference type="NCBIfam" id="TIGR00706">
    <property type="entry name" value="SppA_dom"/>
    <property type="match status" value="1"/>
</dbReference>
<dbReference type="PANTHER" id="PTHR42987">
    <property type="entry name" value="PEPTIDASE S49"/>
    <property type="match status" value="1"/>
</dbReference>
<dbReference type="PANTHER" id="PTHR42987:SF4">
    <property type="entry name" value="PROTEASE SOHB-RELATED"/>
    <property type="match status" value="1"/>
</dbReference>
<dbReference type="Pfam" id="PF01343">
    <property type="entry name" value="Peptidase_S49"/>
    <property type="match status" value="1"/>
</dbReference>
<dbReference type="SUPFAM" id="SSF52096">
    <property type="entry name" value="ClpP/crotonase"/>
    <property type="match status" value="1"/>
</dbReference>
<evidence type="ECO:0000250" key="1"/>
<evidence type="ECO:0000305" key="2"/>
<sequence length="311" mass="34665">MKKIYIILLILFVILISLIGASILLVMSLSGENVDLFGGEKIAKVYLCNEIYFDYNQGDGIFPQQKKDARYYINLLDDLEKDDSVKGVLLVVNSPGGEVIASEKLARKVEELAKKKPVVVYVEGLDASGAYMVSAPADYIVAEKHSIVGSIGVRMDLMHYYGLMKKLGINVTTIKAGKYKDIGSPFRPMTKEEKEYLQKMINETYMDFVKWVAEHRHLSINYTLKIADGKIYSGEDAKKVGLVDEVGTEEDALKKLEQLANVSNPEIVEYGLEENKGLFGLTYYLGYGIGKGIGEVLYGMEKINGRVELLS</sequence>
<keyword id="KW-0378">Hydrolase</keyword>
<keyword id="KW-0645">Protease</keyword>
<keyword id="KW-1185">Reference proteome</keyword>
<keyword id="KW-0720">Serine protease</keyword>
<proteinExistence type="inferred from homology"/>